<organism>
    <name type="scientific">Jasminum nudiflorum</name>
    <name type="common">Winter jasmine</name>
    <dbReference type="NCBI Taxonomy" id="126431"/>
    <lineage>
        <taxon>Eukaryota</taxon>
        <taxon>Viridiplantae</taxon>
        <taxon>Streptophyta</taxon>
        <taxon>Embryophyta</taxon>
        <taxon>Tracheophyta</taxon>
        <taxon>Spermatophyta</taxon>
        <taxon>Magnoliopsida</taxon>
        <taxon>eudicotyledons</taxon>
        <taxon>Gunneridae</taxon>
        <taxon>Pentapetalae</taxon>
        <taxon>asterids</taxon>
        <taxon>lamiids</taxon>
        <taxon>Lamiales</taxon>
        <taxon>Oleaceae</taxon>
        <taxon>Jasmineae</taxon>
        <taxon>Jasminum</taxon>
    </lineage>
</organism>
<geneLocation type="chloroplast"/>
<evidence type="ECO:0000255" key="1">
    <source>
        <dbReference type="HAMAP-Rule" id="MF_01308"/>
    </source>
</evidence>
<evidence type="ECO:0000305" key="2"/>
<keyword id="KW-0050">Antiport</keyword>
<keyword id="KW-0150">Chloroplast</keyword>
<keyword id="KW-0375">Hydrogen ion transport</keyword>
<keyword id="KW-0406">Ion transport</keyword>
<keyword id="KW-0472">Membrane</keyword>
<keyword id="KW-0934">Plastid</keyword>
<keyword id="KW-1001">Plastid inner membrane</keyword>
<keyword id="KW-0630">Potassium</keyword>
<keyword id="KW-0633">Potassium transport</keyword>
<keyword id="KW-0812">Transmembrane</keyword>
<keyword id="KW-1133">Transmembrane helix</keyword>
<keyword id="KW-0813">Transport</keyword>
<proteinExistence type="inferred from homology"/>
<accession>Q06RC0</accession>
<comment type="function">
    <text evidence="1">Contributes to K(+)/H(+) antiport activity by supporting proton efflux to control proton extrusion and homeostasis in chloroplasts in a light-dependent manner to modulate photosynthesis. Prevents excessive induction of non-photochemical quenching (NPQ) under continuous-light conditions. Indirectly promotes efficient inorganic carbon uptake into chloroplasts.</text>
</comment>
<comment type="catalytic activity">
    <reaction evidence="1">
        <text>K(+)(in) + H(+)(out) = K(+)(out) + H(+)(in)</text>
        <dbReference type="Rhea" id="RHEA:29467"/>
        <dbReference type="ChEBI" id="CHEBI:15378"/>
        <dbReference type="ChEBI" id="CHEBI:29103"/>
    </reaction>
</comment>
<comment type="subcellular location">
    <subcellularLocation>
        <location evidence="1">Plastid</location>
        <location evidence="1">Chloroplast inner membrane</location>
        <topology evidence="1">Multi-pass membrane protein</topology>
    </subcellularLocation>
</comment>
<comment type="similarity">
    <text evidence="1 2">Belongs to the CemA family.</text>
</comment>
<gene>
    <name evidence="1" type="primary">cemA</name>
    <name type="ORF">JNC0667</name>
</gene>
<sequence>MAKKKAFTPLLYFASIVFLPWWISLSFTKSMESWVTNWWNTGQSEIFLNDIQEKSILERFIELEEILLLDEMIKEHSETRLQKLGIGIHKETIQLIKIQNEDRIHTILHLSTNIISFVILSGYSIFGNEELVILNSLAQEFLYNLSDTVKAFSILLLTDLCIGFHSPRGWELMIGSVYKDFGFVHNDQMISGLVSTFPVILDTLLKYWIFRYLNRVSPSLVVIYHSMND</sequence>
<dbReference type="EMBL" id="DQ673255">
    <property type="protein sequence ID" value="ABG74639.1"/>
    <property type="molecule type" value="Genomic_DNA"/>
</dbReference>
<dbReference type="RefSeq" id="YP_778501.1">
    <property type="nucleotide sequence ID" value="NC_008407.1"/>
</dbReference>
<dbReference type="GeneID" id="4319770"/>
<dbReference type="GO" id="GO:0009706">
    <property type="term" value="C:chloroplast inner membrane"/>
    <property type="evidence" value="ECO:0007669"/>
    <property type="project" value="UniProtKB-SubCell"/>
</dbReference>
<dbReference type="GO" id="GO:0015297">
    <property type="term" value="F:antiporter activity"/>
    <property type="evidence" value="ECO:0007669"/>
    <property type="project" value="UniProtKB-KW"/>
</dbReference>
<dbReference type="GO" id="GO:0015078">
    <property type="term" value="F:proton transmembrane transporter activity"/>
    <property type="evidence" value="ECO:0007669"/>
    <property type="project" value="UniProtKB-UniRule"/>
</dbReference>
<dbReference type="GO" id="GO:0006813">
    <property type="term" value="P:potassium ion transport"/>
    <property type="evidence" value="ECO:0007669"/>
    <property type="project" value="UniProtKB-UniRule"/>
</dbReference>
<dbReference type="HAMAP" id="MF_01308">
    <property type="entry name" value="CemA_PxcA"/>
    <property type="match status" value="1"/>
</dbReference>
<dbReference type="InterPro" id="IPR004282">
    <property type="entry name" value="CemA"/>
</dbReference>
<dbReference type="PANTHER" id="PTHR33650:SF2">
    <property type="entry name" value="CHLOROPLAST ENVELOPE MEMBRANE PROTEIN"/>
    <property type="match status" value="1"/>
</dbReference>
<dbReference type="PANTHER" id="PTHR33650">
    <property type="entry name" value="CHLOROPLAST ENVELOPE MEMBRANE PROTEIN-RELATED"/>
    <property type="match status" value="1"/>
</dbReference>
<dbReference type="Pfam" id="PF03040">
    <property type="entry name" value="CemA"/>
    <property type="match status" value="1"/>
</dbReference>
<feature type="chain" id="PRO_0000275241" description="Potassium/proton antiporter CemA">
    <location>
        <begin position="1"/>
        <end position="229"/>
    </location>
</feature>
<feature type="transmembrane region" description="Helical" evidence="1">
    <location>
        <begin position="7"/>
        <end position="27"/>
    </location>
</feature>
<feature type="transmembrane region" description="Helical" evidence="1">
    <location>
        <begin position="114"/>
        <end position="134"/>
    </location>
</feature>
<feature type="transmembrane region" description="Helical" evidence="1">
    <location>
        <begin position="190"/>
        <end position="210"/>
    </location>
</feature>
<reference key="1">
    <citation type="journal article" date="2007" name="Mol. Biol. Evol.">
        <title>Gene relocations within chloroplast genomes of Jasminum and Menodora (Oleaceae) are due to multiple, overlapping inversions.</title>
        <authorList>
            <person name="Lee H.-L."/>
            <person name="Jansen R.K."/>
            <person name="Chumley T.W."/>
            <person name="Kim K.-J."/>
        </authorList>
    </citation>
    <scope>NUCLEOTIDE SEQUENCE [LARGE SCALE GENOMIC DNA]</scope>
</reference>
<name>CEMA_JASNU</name>
<protein>
    <recommendedName>
        <fullName evidence="1">Potassium/proton antiporter CemA</fullName>
    </recommendedName>
    <alternativeName>
        <fullName evidence="1">Chloroplast envelope membrane protein A</fullName>
        <shortName evidence="1">CemA</shortName>
    </alternativeName>
</protein>